<dbReference type="EC" id="3.6.4.-" evidence="1"/>
<dbReference type="EMBL" id="M20310">
    <property type="protein sequence ID" value="AAA30152.1"/>
    <property type="molecule type" value="Genomic_DNA"/>
</dbReference>
<dbReference type="SMR" id="P12433"/>
<dbReference type="GO" id="GO:0097014">
    <property type="term" value="C:ciliary plasm"/>
    <property type="evidence" value="ECO:0000314"/>
    <property type="project" value="GeneDB"/>
</dbReference>
<dbReference type="GO" id="GO:0005737">
    <property type="term" value="C:cytoplasm"/>
    <property type="evidence" value="ECO:0000314"/>
    <property type="project" value="GeneDB"/>
</dbReference>
<dbReference type="GO" id="GO:0005856">
    <property type="term" value="C:cytoskeleton"/>
    <property type="evidence" value="ECO:0007669"/>
    <property type="project" value="UniProtKB-SubCell"/>
</dbReference>
<dbReference type="GO" id="GO:0005524">
    <property type="term" value="F:ATP binding"/>
    <property type="evidence" value="ECO:0007669"/>
    <property type="project" value="UniProtKB-KW"/>
</dbReference>
<dbReference type="GO" id="GO:0016787">
    <property type="term" value="F:hydrolase activity"/>
    <property type="evidence" value="ECO:0007669"/>
    <property type="project" value="UniProtKB-KW"/>
</dbReference>
<dbReference type="FunFam" id="3.90.640.10:FF:000007">
    <property type="entry name" value="Actin like 7B"/>
    <property type="match status" value="1"/>
</dbReference>
<dbReference type="FunFam" id="3.30.420.40:FF:000205">
    <property type="entry name" value="Actin, alpha skeletal muscle"/>
    <property type="match status" value="1"/>
</dbReference>
<dbReference type="FunFam" id="3.30.420.40:FF:000018">
    <property type="entry name" value="Actin-like protein (Centractin)"/>
    <property type="match status" value="1"/>
</dbReference>
<dbReference type="FunFam" id="3.30.420.40:FF:000058">
    <property type="entry name" value="Putative actin-related protein 5"/>
    <property type="match status" value="1"/>
</dbReference>
<dbReference type="Gene3D" id="3.30.420.40">
    <property type="match status" value="2"/>
</dbReference>
<dbReference type="Gene3D" id="3.90.640.10">
    <property type="entry name" value="Actin, Chain A, domain 4"/>
    <property type="match status" value="1"/>
</dbReference>
<dbReference type="InterPro" id="IPR004000">
    <property type="entry name" value="Actin"/>
</dbReference>
<dbReference type="InterPro" id="IPR020902">
    <property type="entry name" value="Actin/actin-like_CS"/>
</dbReference>
<dbReference type="InterPro" id="IPR004001">
    <property type="entry name" value="Actin_CS"/>
</dbReference>
<dbReference type="InterPro" id="IPR043129">
    <property type="entry name" value="ATPase_NBD"/>
</dbReference>
<dbReference type="PANTHER" id="PTHR11937">
    <property type="entry name" value="ACTIN"/>
    <property type="match status" value="1"/>
</dbReference>
<dbReference type="Pfam" id="PF00022">
    <property type="entry name" value="Actin"/>
    <property type="match status" value="1"/>
</dbReference>
<dbReference type="PRINTS" id="PR00190">
    <property type="entry name" value="ACTIN"/>
</dbReference>
<dbReference type="SMART" id="SM00268">
    <property type="entry name" value="ACTIN"/>
    <property type="match status" value="1"/>
</dbReference>
<dbReference type="SUPFAM" id="SSF53067">
    <property type="entry name" value="Actin-like ATPase domain"/>
    <property type="match status" value="2"/>
</dbReference>
<dbReference type="PROSITE" id="PS00406">
    <property type="entry name" value="ACTINS_1"/>
    <property type="match status" value="1"/>
</dbReference>
<dbReference type="PROSITE" id="PS00432">
    <property type="entry name" value="ACTINS_2"/>
    <property type="match status" value="1"/>
</dbReference>
<dbReference type="PROSITE" id="PS01132">
    <property type="entry name" value="ACTINS_ACT_LIKE"/>
    <property type="match status" value="1"/>
</dbReference>
<comment type="function">
    <text>Actins are highly conserved proteins that are involved in various types of cell motility and are ubiquitously expressed in all eukaryotic cells.</text>
</comment>
<comment type="catalytic activity">
    <reaction evidence="1">
        <text>ATP + H2O = ADP + phosphate + H(+)</text>
        <dbReference type="Rhea" id="RHEA:13065"/>
        <dbReference type="ChEBI" id="CHEBI:15377"/>
        <dbReference type="ChEBI" id="CHEBI:15378"/>
        <dbReference type="ChEBI" id="CHEBI:30616"/>
        <dbReference type="ChEBI" id="CHEBI:43474"/>
        <dbReference type="ChEBI" id="CHEBI:456216"/>
    </reaction>
</comment>
<comment type="subcellular location">
    <subcellularLocation>
        <location>Cytoplasm</location>
        <location>Cytoskeleton</location>
    </subcellularLocation>
</comment>
<comment type="similarity">
    <text evidence="2">Belongs to the actin family.</text>
</comment>
<keyword id="KW-0067">ATP-binding</keyword>
<keyword id="KW-0963">Cytoplasm</keyword>
<keyword id="KW-0206">Cytoskeleton</keyword>
<keyword id="KW-0378">Hydrolase</keyword>
<keyword id="KW-0547">Nucleotide-binding</keyword>
<feature type="chain" id="PRO_0000089047" description="Actin B">
    <location>
        <begin position="1"/>
        <end position="376"/>
    </location>
</feature>
<evidence type="ECO:0000250" key="1">
    <source>
        <dbReference type="UniProtKB" id="Q8I4X0"/>
    </source>
</evidence>
<evidence type="ECO:0000305" key="2"/>
<accession>P12433</accession>
<protein>
    <recommendedName>
        <fullName>Actin B</fullName>
        <ecNumber evidence="1">3.6.4.-</ecNumber>
    </recommendedName>
</protein>
<reference key="1">
    <citation type="journal article" date="1988" name="Mol. Cell. Biol.">
        <title>Structure and transcription of the actin gene of Trypanosoma brucei.</title>
        <authorList>
            <person name="Ben-Amar M.F."/>
            <person name="Pays A."/>
            <person name="Tebabi P."/>
            <person name="Dero B."/>
            <person name="Seebeck T."/>
            <person name="Steinert M."/>
            <person name="Pays E."/>
        </authorList>
    </citation>
    <scope>NUCLEOTIDE SEQUENCE [GENOMIC DNA]</scope>
</reference>
<organism>
    <name type="scientific">Trypanosoma brucei brucei</name>
    <dbReference type="NCBI Taxonomy" id="5702"/>
    <lineage>
        <taxon>Eukaryota</taxon>
        <taxon>Discoba</taxon>
        <taxon>Euglenozoa</taxon>
        <taxon>Kinetoplastea</taxon>
        <taxon>Metakinetoplastina</taxon>
        <taxon>Trypanosomatida</taxon>
        <taxon>Trypanosomatidae</taxon>
        <taxon>Trypanosoma</taxon>
    </lineage>
</organism>
<sequence length="376" mass="41882">MSDEEQTAIVCDNGSGMVKSGFSGDDAPRHLFPSIVGPPKNEQAMMGSAKQEMFVGDEAQAKRGVLALKYPIEHGIVTNWDDMEKVWHHTFYNELRVNPESHNVLLTEAPMNPKQNREKMTQIMFETFGVPAMYVGIQAVLSLYSSGRTTGIVLDAGDGVTHTVPIYEGYSLPHAIRRVDMAGRDLTEYLMKILMETGMTFTTSAQKEIVRNIKEQLCYVALDFDEEMTNSAKSVSEEPFELPDGNVMQVGNQRFRCPQALFKPALIGLDEAPGFHEMTFQSINKCDIDVRRDLYGNIVLSGGTTMFKNLPERLGKEISNLAPSSIKPKVVAPPERKYSVWIGGSILSSLTTFQSMWITKSEYDESGPSIVHSKCF</sequence>
<proteinExistence type="inferred from homology"/>
<name>ACT2_TRYBB</name>